<comment type="function">
    <text evidence="2">Accessory subunit of the mitochondrial membrane respiratory chain NADH dehydrogenase (Complex I), that is believed not to be involved in catalysis. Complex I functions in the transfer of electrons from NADH to the respiratory chain. The immediate electron acceptor for the enzyme is believed to be ubiquinone.</text>
</comment>
<comment type="subunit">
    <text evidence="2">Complex I is composed of 45 different subunits. Interacts with BCAP31.</text>
</comment>
<comment type="subcellular location">
    <subcellularLocation>
        <location evidence="2">Mitochondrion inner membrane</location>
        <topology evidence="2">Single-pass membrane protein</topology>
    </subcellularLocation>
    <text evidence="2">The interaction with BCAP31 mediates mitochondria localization.</text>
</comment>
<comment type="similarity">
    <text evidence="5">Belongs to the complex I NDUFB11 subunit family.</text>
</comment>
<name>NDUBB_GORGO</name>
<feature type="transit peptide" description="Mitochondrion" evidence="1">
    <location>
        <begin position="1"/>
        <end position="29"/>
    </location>
</feature>
<feature type="chain" id="PRO_0000251845" description="NADH dehydrogenase [ubiquinone] 1 beta subcomplex subunit 11, mitochondrial">
    <location>
        <begin position="30"/>
        <end position="153"/>
    </location>
</feature>
<feature type="transmembrane region" description="Helical" evidence="3">
    <location>
        <begin position="89"/>
        <end position="109"/>
    </location>
</feature>
<feature type="region of interest" description="Disordered" evidence="4">
    <location>
        <begin position="40"/>
        <end position="77"/>
    </location>
</feature>
<feature type="compositionally biased region" description="Basic and acidic residues" evidence="4">
    <location>
        <begin position="66"/>
        <end position="77"/>
    </location>
</feature>
<organism>
    <name type="scientific">Gorilla gorilla gorilla</name>
    <name type="common">Western lowland gorilla</name>
    <dbReference type="NCBI Taxonomy" id="9595"/>
    <lineage>
        <taxon>Eukaryota</taxon>
        <taxon>Metazoa</taxon>
        <taxon>Chordata</taxon>
        <taxon>Craniata</taxon>
        <taxon>Vertebrata</taxon>
        <taxon>Euteleostomi</taxon>
        <taxon>Mammalia</taxon>
        <taxon>Eutheria</taxon>
        <taxon>Euarchontoglires</taxon>
        <taxon>Primates</taxon>
        <taxon>Haplorrhini</taxon>
        <taxon>Catarrhini</taxon>
        <taxon>Hominidae</taxon>
        <taxon>Gorilla</taxon>
    </lineage>
</organism>
<accession>Q0MQJ4</accession>
<keyword id="KW-0249">Electron transport</keyword>
<keyword id="KW-0472">Membrane</keyword>
<keyword id="KW-0496">Mitochondrion</keyword>
<keyword id="KW-0999">Mitochondrion inner membrane</keyword>
<keyword id="KW-1185">Reference proteome</keyword>
<keyword id="KW-0679">Respiratory chain</keyword>
<keyword id="KW-0809">Transit peptide</keyword>
<keyword id="KW-0812">Transmembrane</keyword>
<keyword id="KW-1133">Transmembrane helix</keyword>
<keyword id="KW-0813">Transport</keyword>
<dbReference type="EMBL" id="DQ885640">
    <property type="protein sequence ID" value="ABH12149.1"/>
    <property type="molecule type" value="mRNA"/>
</dbReference>
<dbReference type="RefSeq" id="NP_001266626.1">
    <property type="nucleotide sequence ID" value="NM_001279697.1"/>
</dbReference>
<dbReference type="SMR" id="Q0MQJ4"/>
<dbReference type="FunCoup" id="Q0MQJ4">
    <property type="interactions" value="984"/>
</dbReference>
<dbReference type="STRING" id="9593.ENSGGOP00000007685"/>
<dbReference type="GeneID" id="101130165"/>
<dbReference type="KEGG" id="ggo:101130165"/>
<dbReference type="CTD" id="54539"/>
<dbReference type="eggNOG" id="KOG4808">
    <property type="taxonomic scope" value="Eukaryota"/>
</dbReference>
<dbReference type="HOGENOM" id="CLU_109862_0_0_1"/>
<dbReference type="InParanoid" id="Q0MQJ4"/>
<dbReference type="OrthoDB" id="13655at9604"/>
<dbReference type="Proteomes" id="UP000001519">
    <property type="component" value="Unplaced"/>
</dbReference>
<dbReference type="GO" id="GO:0005743">
    <property type="term" value="C:mitochondrial inner membrane"/>
    <property type="evidence" value="ECO:0007669"/>
    <property type="project" value="UniProtKB-SubCell"/>
</dbReference>
<dbReference type="GO" id="GO:0045271">
    <property type="term" value="C:respiratory chain complex I"/>
    <property type="evidence" value="ECO:0000250"/>
    <property type="project" value="UniProtKB"/>
</dbReference>
<dbReference type="InterPro" id="IPR019329">
    <property type="entry name" value="NADH_UbQ_OxRdtase_ESSS_su"/>
</dbReference>
<dbReference type="PANTHER" id="PTHR13327:SF0">
    <property type="entry name" value="NADH DEHYDROGENASE [UBIQUINONE] 1 BETA SUBCOMPLEX SUBUNIT 11, MITOCHONDRIAL"/>
    <property type="match status" value="1"/>
</dbReference>
<dbReference type="PANTHER" id="PTHR13327">
    <property type="entry name" value="NADH-UBIQUINONE OXIDOREDUCTASE ESSS SUBUNIT, MITOCHONDRIAL PRECURSOR"/>
    <property type="match status" value="1"/>
</dbReference>
<dbReference type="Pfam" id="PF10183">
    <property type="entry name" value="ESSS"/>
    <property type="match status" value="1"/>
</dbReference>
<sequence>MAAGLFGLSARRLLAAAATRGLPAARVRWESSFSRTVVAPSAVAGKRPPEPTTQWQEDPEPEDENLYEKNPDSHGYDKDPVLDVWNMRLVFFFGVSIILVLGSTFVAYLPDYRMKEWSRREAERLVKYREANGLPIMESNCFDPSKIELPEDE</sequence>
<protein>
    <recommendedName>
        <fullName>NADH dehydrogenase [ubiquinone] 1 beta subcomplex subunit 11, mitochondrial</fullName>
    </recommendedName>
    <alternativeName>
        <fullName>Complex I-ESSS</fullName>
        <shortName>CI-ESSS</shortName>
    </alternativeName>
    <alternativeName>
        <fullName>NADH-ubiquinone oxidoreductase ESSS subunit</fullName>
    </alternativeName>
</protein>
<gene>
    <name type="primary">NDUFB11</name>
</gene>
<evidence type="ECO:0000250" key="1"/>
<evidence type="ECO:0000250" key="2">
    <source>
        <dbReference type="UniProtKB" id="Q9NX14"/>
    </source>
</evidence>
<evidence type="ECO:0000255" key="3"/>
<evidence type="ECO:0000256" key="4">
    <source>
        <dbReference type="SAM" id="MobiDB-lite"/>
    </source>
</evidence>
<evidence type="ECO:0000305" key="5"/>
<proteinExistence type="evidence at transcript level"/>
<reference key="1">
    <citation type="journal article" date="2006" name="Gene">
        <title>Adaptive selection of mitochondrial complex I subunits during primate radiation.</title>
        <authorList>
            <person name="Mishmar D."/>
            <person name="Ruiz-Pesini E."/>
            <person name="Mondragon-Palomino M."/>
            <person name="Procaccio V."/>
            <person name="Gaut B."/>
            <person name="Wallace D.C."/>
        </authorList>
    </citation>
    <scope>NUCLEOTIDE SEQUENCE [MRNA]</scope>
</reference>